<dbReference type="EC" id="1.5.1.5" evidence="1"/>
<dbReference type="EC" id="3.5.4.9" evidence="1"/>
<dbReference type="EMBL" id="BX936398">
    <property type="protein sequence ID" value="CAH20277.1"/>
    <property type="molecule type" value="Genomic_DNA"/>
</dbReference>
<dbReference type="RefSeq" id="WP_002209774.1">
    <property type="nucleotide sequence ID" value="NZ_CP009712.1"/>
</dbReference>
<dbReference type="SMR" id="Q66DK7"/>
<dbReference type="GeneID" id="57975784"/>
<dbReference type="KEGG" id="ypo:BZ17_1509"/>
<dbReference type="KEGG" id="yps:YPTB1037"/>
<dbReference type="PATRIC" id="fig|273123.14.peg.1601"/>
<dbReference type="UniPathway" id="UPA00193"/>
<dbReference type="Proteomes" id="UP000001011">
    <property type="component" value="Chromosome"/>
</dbReference>
<dbReference type="GO" id="GO:0005829">
    <property type="term" value="C:cytosol"/>
    <property type="evidence" value="ECO:0007669"/>
    <property type="project" value="TreeGrafter"/>
</dbReference>
<dbReference type="GO" id="GO:0004477">
    <property type="term" value="F:methenyltetrahydrofolate cyclohydrolase activity"/>
    <property type="evidence" value="ECO:0007669"/>
    <property type="project" value="UniProtKB-UniRule"/>
</dbReference>
<dbReference type="GO" id="GO:0004488">
    <property type="term" value="F:methylenetetrahydrofolate dehydrogenase (NADP+) activity"/>
    <property type="evidence" value="ECO:0007669"/>
    <property type="project" value="UniProtKB-UniRule"/>
</dbReference>
<dbReference type="GO" id="GO:0000105">
    <property type="term" value="P:L-histidine biosynthetic process"/>
    <property type="evidence" value="ECO:0007669"/>
    <property type="project" value="UniProtKB-KW"/>
</dbReference>
<dbReference type="GO" id="GO:0009086">
    <property type="term" value="P:methionine biosynthetic process"/>
    <property type="evidence" value="ECO:0007669"/>
    <property type="project" value="UniProtKB-KW"/>
</dbReference>
<dbReference type="GO" id="GO:0006164">
    <property type="term" value="P:purine nucleotide biosynthetic process"/>
    <property type="evidence" value="ECO:0007669"/>
    <property type="project" value="UniProtKB-KW"/>
</dbReference>
<dbReference type="GO" id="GO:0035999">
    <property type="term" value="P:tetrahydrofolate interconversion"/>
    <property type="evidence" value="ECO:0007669"/>
    <property type="project" value="UniProtKB-UniRule"/>
</dbReference>
<dbReference type="CDD" id="cd01080">
    <property type="entry name" value="NAD_bind_m-THF_DH_Cyclohyd"/>
    <property type="match status" value="1"/>
</dbReference>
<dbReference type="FunFam" id="3.40.50.10860:FF:000001">
    <property type="entry name" value="Bifunctional protein FolD"/>
    <property type="match status" value="1"/>
</dbReference>
<dbReference type="FunFam" id="3.40.50.720:FF:000006">
    <property type="entry name" value="Bifunctional protein FolD"/>
    <property type="match status" value="1"/>
</dbReference>
<dbReference type="Gene3D" id="3.40.50.10860">
    <property type="entry name" value="Leucine Dehydrogenase, chain A, domain 1"/>
    <property type="match status" value="1"/>
</dbReference>
<dbReference type="Gene3D" id="3.40.50.720">
    <property type="entry name" value="NAD(P)-binding Rossmann-like Domain"/>
    <property type="match status" value="1"/>
</dbReference>
<dbReference type="HAMAP" id="MF_01576">
    <property type="entry name" value="THF_DHG_CYH"/>
    <property type="match status" value="1"/>
</dbReference>
<dbReference type="InterPro" id="IPR046346">
    <property type="entry name" value="Aminoacid_DH-like_N_sf"/>
</dbReference>
<dbReference type="InterPro" id="IPR036291">
    <property type="entry name" value="NAD(P)-bd_dom_sf"/>
</dbReference>
<dbReference type="InterPro" id="IPR000672">
    <property type="entry name" value="THF_DH/CycHdrlase"/>
</dbReference>
<dbReference type="InterPro" id="IPR020630">
    <property type="entry name" value="THF_DH/CycHdrlase_cat_dom"/>
</dbReference>
<dbReference type="InterPro" id="IPR020867">
    <property type="entry name" value="THF_DH/CycHdrlase_CS"/>
</dbReference>
<dbReference type="InterPro" id="IPR020631">
    <property type="entry name" value="THF_DH/CycHdrlase_NAD-bd_dom"/>
</dbReference>
<dbReference type="NCBIfam" id="NF008058">
    <property type="entry name" value="PRK10792.1"/>
    <property type="match status" value="1"/>
</dbReference>
<dbReference type="NCBIfam" id="NF010783">
    <property type="entry name" value="PRK14186.1"/>
    <property type="match status" value="1"/>
</dbReference>
<dbReference type="PANTHER" id="PTHR48099:SF5">
    <property type="entry name" value="C-1-TETRAHYDROFOLATE SYNTHASE, CYTOPLASMIC"/>
    <property type="match status" value="1"/>
</dbReference>
<dbReference type="PANTHER" id="PTHR48099">
    <property type="entry name" value="C-1-TETRAHYDROFOLATE SYNTHASE, CYTOPLASMIC-RELATED"/>
    <property type="match status" value="1"/>
</dbReference>
<dbReference type="Pfam" id="PF00763">
    <property type="entry name" value="THF_DHG_CYH"/>
    <property type="match status" value="1"/>
</dbReference>
<dbReference type="Pfam" id="PF02882">
    <property type="entry name" value="THF_DHG_CYH_C"/>
    <property type="match status" value="1"/>
</dbReference>
<dbReference type="PRINTS" id="PR00085">
    <property type="entry name" value="THFDHDRGNASE"/>
</dbReference>
<dbReference type="SUPFAM" id="SSF53223">
    <property type="entry name" value="Aminoacid dehydrogenase-like, N-terminal domain"/>
    <property type="match status" value="1"/>
</dbReference>
<dbReference type="SUPFAM" id="SSF51735">
    <property type="entry name" value="NAD(P)-binding Rossmann-fold domains"/>
    <property type="match status" value="1"/>
</dbReference>
<dbReference type="PROSITE" id="PS00766">
    <property type="entry name" value="THF_DHG_CYH_1"/>
    <property type="match status" value="1"/>
</dbReference>
<dbReference type="PROSITE" id="PS00767">
    <property type="entry name" value="THF_DHG_CYH_2"/>
    <property type="match status" value="1"/>
</dbReference>
<protein>
    <recommendedName>
        <fullName evidence="1">Bifunctional protein FolD</fullName>
    </recommendedName>
    <domain>
        <recommendedName>
            <fullName evidence="1">Methylenetetrahydrofolate dehydrogenase</fullName>
            <ecNumber evidence="1">1.5.1.5</ecNumber>
        </recommendedName>
    </domain>
    <domain>
        <recommendedName>
            <fullName evidence="1">Methenyltetrahydrofolate cyclohydrolase</fullName>
            <ecNumber evidence="1">3.5.4.9</ecNumber>
        </recommendedName>
    </domain>
</protein>
<comment type="function">
    <text evidence="1">Catalyzes the oxidation of 5,10-methylenetetrahydrofolate to 5,10-methenyltetrahydrofolate and then the hydrolysis of 5,10-methenyltetrahydrofolate to 10-formyltetrahydrofolate.</text>
</comment>
<comment type="catalytic activity">
    <reaction evidence="1">
        <text>(6R)-5,10-methylene-5,6,7,8-tetrahydrofolate + NADP(+) = (6R)-5,10-methenyltetrahydrofolate + NADPH</text>
        <dbReference type="Rhea" id="RHEA:22812"/>
        <dbReference type="ChEBI" id="CHEBI:15636"/>
        <dbReference type="ChEBI" id="CHEBI:57455"/>
        <dbReference type="ChEBI" id="CHEBI:57783"/>
        <dbReference type="ChEBI" id="CHEBI:58349"/>
        <dbReference type="EC" id="1.5.1.5"/>
    </reaction>
</comment>
<comment type="catalytic activity">
    <reaction evidence="1">
        <text>(6R)-5,10-methenyltetrahydrofolate + H2O = (6R)-10-formyltetrahydrofolate + H(+)</text>
        <dbReference type="Rhea" id="RHEA:23700"/>
        <dbReference type="ChEBI" id="CHEBI:15377"/>
        <dbReference type="ChEBI" id="CHEBI:15378"/>
        <dbReference type="ChEBI" id="CHEBI:57455"/>
        <dbReference type="ChEBI" id="CHEBI:195366"/>
        <dbReference type="EC" id="3.5.4.9"/>
    </reaction>
</comment>
<comment type="pathway">
    <text evidence="1">One-carbon metabolism; tetrahydrofolate interconversion.</text>
</comment>
<comment type="subunit">
    <text evidence="1">Homodimer.</text>
</comment>
<comment type="similarity">
    <text evidence="1">Belongs to the tetrahydrofolate dehydrogenase/cyclohydrolase family.</text>
</comment>
<keyword id="KW-0028">Amino-acid biosynthesis</keyword>
<keyword id="KW-0368">Histidine biosynthesis</keyword>
<keyword id="KW-0378">Hydrolase</keyword>
<keyword id="KW-0486">Methionine biosynthesis</keyword>
<keyword id="KW-0511">Multifunctional enzyme</keyword>
<keyword id="KW-0521">NADP</keyword>
<keyword id="KW-0554">One-carbon metabolism</keyword>
<keyword id="KW-0560">Oxidoreductase</keyword>
<keyword id="KW-0658">Purine biosynthesis</keyword>
<accession>Q66DK7</accession>
<organism>
    <name type="scientific">Yersinia pseudotuberculosis serotype I (strain IP32953)</name>
    <dbReference type="NCBI Taxonomy" id="273123"/>
    <lineage>
        <taxon>Bacteria</taxon>
        <taxon>Pseudomonadati</taxon>
        <taxon>Pseudomonadota</taxon>
        <taxon>Gammaproteobacteria</taxon>
        <taxon>Enterobacterales</taxon>
        <taxon>Yersiniaceae</taxon>
        <taxon>Yersinia</taxon>
    </lineage>
</organism>
<proteinExistence type="inferred from homology"/>
<reference key="1">
    <citation type="journal article" date="2004" name="Proc. Natl. Acad. Sci. U.S.A.">
        <title>Insights into the evolution of Yersinia pestis through whole-genome comparison with Yersinia pseudotuberculosis.</title>
        <authorList>
            <person name="Chain P.S.G."/>
            <person name="Carniel E."/>
            <person name="Larimer F.W."/>
            <person name="Lamerdin J."/>
            <person name="Stoutland P.O."/>
            <person name="Regala W.M."/>
            <person name="Georgescu A.M."/>
            <person name="Vergez L.M."/>
            <person name="Land M.L."/>
            <person name="Motin V.L."/>
            <person name="Brubaker R.R."/>
            <person name="Fowler J."/>
            <person name="Hinnebusch J."/>
            <person name="Marceau M."/>
            <person name="Medigue C."/>
            <person name="Simonet M."/>
            <person name="Chenal-Francisque V."/>
            <person name="Souza B."/>
            <person name="Dacheux D."/>
            <person name="Elliott J.M."/>
            <person name="Derbise A."/>
            <person name="Hauser L.J."/>
            <person name="Garcia E."/>
        </authorList>
    </citation>
    <scope>NUCLEOTIDE SEQUENCE [LARGE SCALE GENOMIC DNA]</scope>
    <source>
        <strain>IP32953</strain>
    </source>
</reference>
<gene>
    <name evidence="1" type="primary">folD</name>
    <name type="ordered locus">YPTB1037</name>
</gene>
<name>FOLD_YERPS</name>
<sequence length="288" mass="30983">MSAKIIDGKTIAQQVRNEVAAVVQQRLAAGKRAPGLAVVLVGENPASQIYVASKRKACEEVGFVSRSYDLPMATSEAELLALIDSLNEDTEIDGILIQLPLPNGIDNVKVLERIHPDKDVDGFHPYNVGRLCQRAPKLRACTPRGIMTLLERYDIPTYGLNAVVVGASNIVGRPMSLELLLAGCTTTVTHRFTKNLRHHIENADLLVVAVGKPGFIPGEWIKPGAIVIDVGINRLESGKVVGDVAFDVAAERAGWITPVPGGVGPMTVATLIQNTLQACEEYHDISQN</sequence>
<evidence type="ECO:0000255" key="1">
    <source>
        <dbReference type="HAMAP-Rule" id="MF_01576"/>
    </source>
</evidence>
<feature type="chain" id="PRO_0000268576" description="Bifunctional protein FolD">
    <location>
        <begin position="1"/>
        <end position="288"/>
    </location>
</feature>
<feature type="binding site" evidence="1">
    <location>
        <begin position="166"/>
        <end position="168"/>
    </location>
    <ligand>
        <name>NADP(+)</name>
        <dbReference type="ChEBI" id="CHEBI:58349"/>
    </ligand>
</feature>
<feature type="binding site" evidence="1">
    <location>
        <position position="232"/>
    </location>
    <ligand>
        <name>NADP(+)</name>
        <dbReference type="ChEBI" id="CHEBI:58349"/>
    </ligand>
</feature>